<accession>Q93VM8</accession>
<accession>Q8SAA4</accession>
<feature type="chain" id="PRO_0000399996" description="Copper transporter 5">
    <location>
        <begin position="1"/>
        <end position="146"/>
    </location>
</feature>
<feature type="transmembrane region" description="Helical" evidence="1">
    <location>
        <begin position="24"/>
        <end position="44"/>
    </location>
</feature>
<feature type="transmembrane region" description="Helical" evidence="1">
    <location>
        <begin position="101"/>
        <end position="121"/>
    </location>
</feature>
<feature type="region of interest" description="Disordered" evidence="2">
    <location>
        <begin position="55"/>
        <end position="74"/>
    </location>
</feature>
<sequence length="146" mass="15784">MMHMTFYWGIKATILFDFWKTDSWLSYILTLIACFVFSAFYQYLENRRIQFKSLSSSRRAPPPPRSSSGVSAPLIPKSGTRSAAKAASVLLFGVNAAIGYLLMLAAMSFNGGVFIAIVVGLTAGYAVFRSDDGGADTATDDPCPCA</sequence>
<proteinExistence type="evidence at protein level"/>
<reference key="1">
    <citation type="journal article" date="2000" name="Nature">
        <title>Sequence and analysis of chromosome 5 of the plant Arabidopsis thaliana.</title>
        <authorList>
            <person name="Tabata S."/>
            <person name="Kaneko T."/>
            <person name="Nakamura Y."/>
            <person name="Kotani H."/>
            <person name="Kato T."/>
            <person name="Asamizu E."/>
            <person name="Miyajima N."/>
            <person name="Sasamoto S."/>
            <person name="Kimura T."/>
            <person name="Hosouchi T."/>
            <person name="Kawashima K."/>
            <person name="Kohara M."/>
            <person name="Matsumoto M."/>
            <person name="Matsuno A."/>
            <person name="Muraki A."/>
            <person name="Nakayama S."/>
            <person name="Nakazaki N."/>
            <person name="Naruo K."/>
            <person name="Okumura S."/>
            <person name="Shinpo S."/>
            <person name="Takeuchi C."/>
            <person name="Wada T."/>
            <person name="Watanabe A."/>
            <person name="Yamada M."/>
            <person name="Yasuda M."/>
            <person name="Sato S."/>
            <person name="de la Bastide M."/>
            <person name="Huang E."/>
            <person name="Spiegel L."/>
            <person name="Gnoj L."/>
            <person name="O'Shaughnessy A."/>
            <person name="Preston R."/>
            <person name="Habermann K."/>
            <person name="Murray J."/>
            <person name="Johnson D."/>
            <person name="Rohlfing T."/>
            <person name="Nelson J."/>
            <person name="Stoneking T."/>
            <person name="Pepin K."/>
            <person name="Spieth J."/>
            <person name="Sekhon M."/>
            <person name="Armstrong J."/>
            <person name="Becker M."/>
            <person name="Belter E."/>
            <person name="Cordum H."/>
            <person name="Cordes M."/>
            <person name="Courtney L."/>
            <person name="Courtney W."/>
            <person name="Dante M."/>
            <person name="Du H."/>
            <person name="Edwards J."/>
            <person name="Fryman J."/>
            <person name="Haakensen B."/>
            <person name="Lamar E."/>
            <person name="Latreille P."/>
            <person name="Leonard S."/>
            <person name="Meyer R."/>
            <person name="Mulvaney E."/>
            <person name="Ozersky P."/>
            <person name="Riley A."/>
            <person name="Strowmatt C."/>
            <person name="Wagner-McPherson C."/>
            <person name="Wollam A."/>
            <person name="Yoakum M."/>
            <person name="Bell M."/>
            <person name="Dedhia N."/>
            <person name="Parnell L."/>
            <person name="Shah R."/>
            <person name="Rodriguez M."/>
            <person name="Hoon See L."/>
            <person name="Vil D."/>
            <person name="Baker J."/>
            <person name="Kirchoff K."/>
            <person name="Toth K."/>
            <person name="King L."/>
            <person name="Bahret A."/>
            <person name="Miller B."/>
            <person name="Marra M.A."/>
            <person name="Martienssen R."/>
            <person name="McCombie W.R."/>
            <person name="Wilson R.K."/>
            <person name="Murphy G."/>
            <person name="Bancroft I."/>
            <person name="Volckaert G."/>
            <person name="Wambutt R."/>
            <person name="Duesterhoeft A."/>
            <person name="Stiekema W."/>
            <person name="Pohl T."/>
            <person name="Entian K.-D."/>
            <person name="Terryn N."/>
            <person name="Hartley N."/>
            <person name="Bent E."/>
            <person name="Johnson S."/>
            <person name="Langham S.-A."/>
            <person name="McCullagh B."/>
            <person name="Robben J."/>
            <person name="Grymonprez B."/>
            <person name="Zimmermann W."/>
            <person name="Ramsperger U."/>
            <person name="Wedler H."/>
            <person name="Balke K."/>
            <person name="Wedler E."/>
            <person name="Peters S."/>
            <person name="van Staveren M."/>
            <person name="Dirkse W."/>
            <person name="Mooijman P."/>
            <person name="Klein Lankhorst R."/>
            <person name="Weitzenegger T."/>
            <person name="Bothe G."/>
            <person name="Rose M."/>
            <person name="Hauf J."/>
            <person name="Berneiser S."/>
            <person name="Hempel S."/>
            <person name="Feldpausch M."/>
            <person name="Lamberth S."/>
            <person name="Villarroel R."/>
            <person name="Gielen J."/>
            <person name="Ardiles W."/>
            <person name="Bents O."/>
            <person name="Lemcke K."/>
            <person name="Kolesov G."/>
            <person name="Mayer K.F.X."/>
            <person name="Rudd S."/>
            <person name="Schoof H."/>
            <person name="Schueller C."/>
            <person name="Zaccaria P."/>
            <person name="Mewes H.-W."/>
            <person name="Bevan M."/>
            <person name="Fransz P.F."/>
        </authorList>
    </citation>
    <scope>NUCLEOTIDE SEQUENCE [LARGE SCALE GENOMIC DNA]</scope>
    <source>
        <strain>cv. Columbia</strain>
    </source>
</reference>
<reference key="2">
    <citation type="journal article" date="2017" name="Plant J.">
        <title>Araport11: a complete reannotation of the Arabidopsis thaliana reference genome.</title>
        <authorList>
            <person name="Cheng C.Y."/>
            <person name="Krishnakumar V."/>
            <person name="Chan A.P."/>
            <person name="Thibaud-Nissen F."/>
            <person name="Schobel S."/>
            <person name="Town C.D."/>
        </authorList>
    </citation>
    <scope>GENOME REANNOTATION</scope>
    <source>
        <strain>cv. Columbia</strain>
    </source>
</reference>
<reference key="3">
    <citation type="journal article" date="2003" name="Science">
        <title>Empirical analysis of transcriptional activity in the Arabidopsis genome.</title>
        <authorList>
            <person name="Yamada K."/>
            <person name="Lim J."/>
            <person name="Dale J.M."/>
            <person name="Chen H."/>
            <person name="Shinn P."/>
            <person name="Palm C.J."/>
            <person name="Southwick A.M."/>
            <person name="Wu H.C."/>
            <person name="Kim C.J."/>
            <person name="Nguyen M."/>
            <person name="Pham P.K."/>
            <person name="Cheuk R.F."/>
            <person name="Karlin-Newmann G."/>
            <person name="Liu S.X."/>
            <person name="Lam B."/>
            <person name="Sakano H."/>
            <person name="Wu T."/>
            <person name="Yu G."/>
            <person name="Miranda M."/>
            <person name="Quach H.L."/>
            <person name="Tripp M."/>
            <person name="Chang C.H."/>
            <person name="Lee J.M."/>
            <person name="Toriumi M.J."/>
            <person name="Chan M.M."/>
            <person name="Tang C.C."/>
            <person name="Onodera C.S."/>
            <person name="Deng J.M."/>
            <person name="Akiyama K."/>
            <person name="Ansari Y."/>
            <person name="Arakawa T."/>
            <person name="Banh J."/>
            <person name="Banno F."/>
            <person name="Bowser L."/>
            <person name="Brooks S.Y."/>
            <person name="Carninci P."/>
            <person name="Chao Q."/>
            <person name="Choy N."/>
            <person name="Enju A."/>
            <person name="Goldsmith A.D."/>
            <person name="Gurjal M."/>
            <person name="Hansen N.F."/>
            <person name="Hayashizaki Y."/>
            <person name="Johnson-Hopson C."/>
            <person name="Hsuan V.W."/>
            <person name="Iida K."/>
            <person name="Karnes M."/>
            <person name="Khan S."/>
            <person name="Koesema E."/>
            <person name="Ishida J."/>
            <person name="Jiang P.X."/>
            <person name="Jones T."/>
            <person name="Kawai J."/>
            <person name="Kamiya A."/>
            <person name="Meyers C."/>
            <person name="Nakajima M."/>
            <person name="Narusaka M."/>
            <person name="Seki M."/>
            <person name="Sakurai T."/>
            <person name="Satou M."/>
            <person name="Tamse R."/>
            <person name="Vaysberg M."/>
            <person name="Wallender E.K."/>
            <person name="Wong C."/>
            <person name="Yamamura Y."/>
            <person name="Yuan S."/>
            <person name="Shinozaki K."/>
            <person name="Davis R.W."/>
            <person name="Theologis A."/>
            <person name="Ecker J.R."/>
        </authorList>
    </citation>
    <scope>NUCLEOTIDE SEQUENCE [LARGE SCALE MRNA]</scope>
    <source>
        <strain>cv. Columbia</strain>
    </source>
</reference>
<reference key="4">
    <citation type="submission" date="2002-03" db="EMBL/GenBank/DDBJ databases">
        <title>Full-length cDNA from Arabidopsis thaliana.</title>
        <authorList>
            <person name="Brover V.V."/>
            <person name="Troukhan M.E."/>
            <person name="Alexandrov N.A."/>
            <person name="Lu Y.-P."/>
            <person name="Flavell R.B."/>
            <person name="Feldmann K.A."/>
        </authorList>
    </citation>
    <scope>NUCLEOTIDE SEQUENCE [LARGE SCALE MRNA]</scope>
</reference>
<reference key="5">
    <citation type="journal article" date="2003" name="Plant Mol. Biol.">
        <title>Identification of a copper transporter family in Arabidopsis thaliana.</title>
        <authorList>
            <person name="Sancenon V."/>
            <person name="Puig S."/>
            <person name="Mira H."/>
            <person name="Thiele D.J."/>
            <person name="Penarrubia L."/>
        </authorList>
    </citation>
    <scope>NUCLEOTIDE SEQUENCE [MRNA] OF 15-146</scope>
    <scope>FUNCTION</scope>
    <scope>TISSUE SPECIFICITY</scope>
    <scope>INDUCTION</scope>
    <scope>GENE FAMILY</scope>
    <scope>NOMENCLATURE</scope>
</reference>
<reference key="6">
    <citation type="journal article" date="2009" name="J. Proteomics">
        <title>Phosphoproteomic analysis of nuclei-enriched fractions from Arabidopsis thaliana.</title>
        <authorList>
            <person name="Jones A.M.E."/>
            <person name="MacLean D."/>
            <person name="Studholme D.J."/>
            <person name="Serna-Sanz A."/>
            <person name="Andreasson E."/>
            <person name="Rathjen J.P."/>
            <person name="Peck S.C."/>
        </authorList>
    </citation>
    <scope>IDENTIFICATION BY MASS SPECTROMETRY [LARGE SCALE ANALYSIS]</scope>
    <source>
        <strain>cv. Columbia</strain>
    </source>
</reference>
<reference key="7">
    <citation type="journal article" date="2009" name="Plant Physiol.">
        <title>Large-scale Arabidopsis phosphoproteome profiling reveals novel chloroplast kinase substrates and phosphorylation networks.</title>
        <authorList>
            <person name="Reiland S."/>
            <person name="Messerli G."/>
            <person name="Baerenfaller K."/>
            <person name="Gerrits B."/>
            <person name="Endler A."/>
            <person name="Grossmann J."/>
            <person name="Gruissem W."/>
            <person name="Baginsky S."/>
        </authorList>
    </citation>
    <scope>IDENTIFICATION BY MASS SPECTROMETRY [LARGE SCALE ANALYSIS]</scope>
</reference>
<gene>
    <name type="primary">COPT5</name>
    <name type="ordered locus">At5g20650</name>
    <name type="ORF">T1M15.50</name>
</gene>
<evidence type="ECO:0000255" key="1"/>
<evidence type="ECO:0000256" key="2">
    <source>
        <dbReference type="SAM" id="MobiDB-lite"/>
    </source>
</evidence>
<evidence type="ECO:0000269" key="3">
    <source>
    </source>
</evidence>
<evidence type="ECO:0000305" key="4"/>
<dbReference type="EMBL" id="AF296832">
    <property type="status" value="NOT_ANNOTATED_CDS"/>
    <property type="molecule type" value="Genomic_DNA"/>
</dbReference>
<dbReference type="EMBL" id="CP002688">
    <property type="protein sequence ID" value="AED92871.1"/>
    <property type="molecule type" value="Genomic_DNA"/>
</dbReference>
<dbReference type="EMBL" id="AY039578">
    <property type="protein sequence ID" value="AAK62633.1"/>
    <property type="molecule type" value="mRNA"/>
</dbReference>
<dbReference type="EMBL" id="AY054124">
    <property type="protein sequence ID" value="AAL06785.1"/>
    <property type="molecule type" value="mRNA"/>
</dbReference>
<dbReference type="EMBL" id="AY086915">
    <property type="protein sequence ID" value="AAM64479.1"/>
    <property type="molecule type" value="mRNA"/>
</dbReference>
<dbReference type="EMBL" id="AF466374">
    <property type="protein sequence ID" value="AAL74266.1"/>
    <property type="molecule type" value="mRNA"/>
</dbReference>
<dbReference type="RefSeq" id="NP_197565.1">
    <property type="nucleotide sequence ID" value="NM_122072.2"/>
</dbReference>
<dbReference type="SMR" id="Q93VM8"/>
<dbReference type="BioGRID" id="17463">
    <property type="interactions" value="8"/>
</dbReference>
<dbReference type="FunCoup" id="Q93VM8">
    <property type="interactions" value="2306"/>
</dbReference>
<dbReference type="IntAct" id="Q93VM8">
    <property type="interactions" value="11"/>
</dbReference>
<dbReference type="STRING" id="3702.Q93VM8"/>
<dbReference type="TCDB" id="1.A.56.1.11">
    <property type="family name" value="the copper transporter (ctr) family"/>
</dbReference>
<dbReference type="iPTMnet" id="Q93VM8"/>
<dbReference type="SwissPalm" id="Q93VM8"/>
<dbReference type="PaxDb" id="3702-AT5G20650.1"/>
<dbReference type="ProteomicsDB" id="241173"/>
<dbReference type="EnsemblPlants" id="AT5G20650.1">
    <property type="protein sequence ID" value="AT5G20650.1"/>
    <property type="gene ID" value="AT5G20650"/>
</dbReference>
<dbReference type="GeneID" id="832188"/>
<dbReference type="Gramene" id="AT5G20650.1">
    <property type="protein sequence ID" value="AT5G20650.1"/>
    <property type="gene ID" value="AT5G20650"/>
</dbReference>
<dbReference type="KEGG" id="ath:AT5G20650"/>
<dbReference type="Araport" id="AT5G20650"/>
<dbReference type="TAIR" id="AT5G20650">
    <property type="gene designation" value="COPT5"/>
</dbReference>
<dbReference type="eggNOG" id="KOG3386">
    <property type="taxonomic scope" value="Eukaryota"/>
</dbReference>
<dbReference type="HOGENOM" id="CLU_079690_1_1_1"/>
<dbReference type="InParanoid" id="Q93VM8"/>
<dbReference type="OMA" id="MMPMHFF"/>
<dbReference type="OrthoDB" id="73901at2759"/>
<dbReference type="PhylomeDB" id="Q93VM8"/>
<dbReference type="PRO" id="PR:Q93VM8"/>
<dbReference type="Proteomes" id="UP000006548">
    <property type="component" value="Chromosome 5"/>
</dbReference>
<dbReference type="ExpressionAtlas" id="Q93VM8">
    <property type="expression patterns" value="baseline and differential"/>
</dbReference>
<dbReference type="GO" id="GO:0005794">
    <property type="term" value="C:Golgi apparatus"/>
    <property type="evidence" value="ECO:0007005"/>
    <property type="project" value="TAIR"/>
</dbReference>
<dbReference type="GO" id="GO:0005770">
    <property type="term" value="C:late endosome"/>
    <property type="evidence" value="ECO:0000314"/>
    <property type="project" value="TAIR"/>
</dbReference>
<dbReference type="GO" id="GO:0016020">
    <property type="term" value="C:membrane"/>
    <property type="evidence" value="ECO:0007669"/>
    <property type="project" value="UniProtKB-SubCell"/>
</dbReference>
<dbReference type="GO" id="GO:0000325">
    <property type="term" value="C:plant-type vacuole"/>
    <property type="evidence" value="ECO:0007005"/>
    <property type="project" value="TAIR"/>
</dbReference>
<dbReference type="GO" id="GO:0009506">
    <property type="term" value="C:plasmodesma"/>
    <property type="evidence" value="ECO:0007005"/>
    <property type="project" value="TAIR"/>
</dbReference>
<dbReference type="GO" id="GO:0009536">
    <property type="term" value="C:plastid"/>
    <property type="evidence" value="ECO:0007005"/>
    <property type="project" value="TAIR"/>
</dbReference>
<dbReference type="GO" id="GO:0005375">
    <property type="term" value="F:copper ion transmembrane transporter activity"/>
    <property type="evidence" value="ECO:0007669"/>
    <property type="project" value="InterPro"/>
</dbReference>
<dbReference type="InterPro" id="IPR007274">
    <property type="entry name" value="Cop_transporter"/>
</dbReference>
<dbReference type="PANTHER" id="PTHR12483:SF27">
    <property type="entry name" value="COPPER TRANSPORT PROTEIN CTR1"/>
    <property type="match status" value="1"/>
</dbReference>
<dbReference type="PANTHER" id="PTHR12483">
    <property type="entry name" value="SOLUTE CARRIER FAMILY 31 COPPER TRANSPORTERS"/>
    <property type="match status" value="1"/>
</dbReference>
<dbReference type="Pfam" id="PF04145">
    <property type="entry name" value="Ctr"/>
    <property type="match status" value="1"/>
</dbReference>
<keyword id="KW-0186">Copper</keyword>
<keyword id="KW-0187">Copper transport</keyword>
<keyword id="KW-0406">Ion transport</keyword>
<keyword id="KW-0472">Membrane</keyword>
<keyword id="KW-1185">Reference proteome</keyword>
<keyword id="KW-0812">Transmembrane</keyword>
<keyword id="KW-1133">Transmembrane helix</keyword>
<keyword id="KW-0813">Transport</keyword>
<comment type="function">
    <text evidence="3">Involved in the transport of copper.</text>
</comment>
<comment type="subcellular location">
    <subcellularLocation>
        <location evidence="4">Membrane</location>
        <topology evidence="4">Multi-pass membrane protein</topology>
    </subcellularLocation>
</comment>
<comment type="tissue specificity">
    <text evidence="3">Highly expressed in leaves and stems and at lower levels in roots and flowers.</text>
</comment>
<comment type="induction">
    <text evidence="3">No change in expression levels after treatment with high concentrations of copper.</text>
</comment>
<comment type="similarity">
    <text evidence="4">Belongs to the copper transporter (Ctr) (TC 1.A.56) family. SLC31A subfamily.</text>
</comment>
<organism>
    <name type="scientific">Arabidopsis thaliana</name>
    <name type="common">Mouse-ear cress</name>
    <dbReference type="NCBI Taxonomy" id="3702"/>
    <lineage>
        <taxon>Eukaryota</taxon>
        <taxon>Viridiplantae</taxon>
        <taxon>Streptophyta</taxon>
        <taxon>Embryophyta</taxon>
        <taxon>Tracheophyta</taxon>
        <taxon>Spermatophyta</taxon>
        <taxon>Magnoliopsida</taxon>
        <taxon>eudicotyledons</taxon>
        <taxon>Gunneridae</taxon>
        <taxon>Pentapetalae</taxon>
        <taxon>rosids</taxon>
        <taxon>malvids</taxon>
        <taxon>Brassicales</taxon>
        <taxon>Brassicaceae</taxon>
        <taxon>Camelineae</taxon>
        <taxon>Arabidopsis</taxon>
    </lineage>
</organism>
<name>COPT5_ARATH</name>
<protein>
    <recommendedName>
        <fullName>Copper transporter 5</fullName>
        <shortName>AtCOPT5</shortName>
    </recommendedName>
</protein>